<proteinExistence type="evidence at protein level"/>
<protein>
    <recommendedName>
        <fullName>Solute carrier family 13 member 2</fullName>
    </recommendedName>
    <alternativeName>
        <fullName evidence="8">Na(+)/dicarboxylate cotransporter 1</fullName>
        <shortName evidence="8">NaDC-1</shortName>
    </alternativeName>
    <alternativeName>
        <fullName>Renal sodium/dicarboxylate cotransporter</fullName>
    </alternativeName>
</protein>
<sequence>MATCWQGLWAYRMYLLVFLLPISLLPLPILVPRKEAYCAYAIILMALFWCTDALPLAVTALLPLCLFPMMGIMEASEVGLEYLKDTNVLFIGGLLLAIAVEHWNLHKRIALRVLLLTGVRPALLILGFMVVTAFLSMWISNTASTAMMVPIAHAVLQELNNTQSNVEEGSDNPTFELQEPSPQKETSKVDEKDNGQAQPLPAVPLESGEHMTQEQLRFSQGMSLCVCYSASIGGIATLTGTTPNLVLQGQMTSLFPQNPNVVNFASWFGFAFPIMVILLLLSWLWLQILFLGINFRKNFGIREQEHEQQRKQAAYRVIQTQYRLLGPMSFAEKAVFILFVILVLLWFTREPGFFHGWGNLVFSDASGRVMVSDGSASILIGVFLFMVPSKIPGLTQDPDNPGRLKAPPALLNWKLVNKKMPWNIVLLLGGGYALAKGSEESGLSQWLGNKLMPLQHVPPPATVFIICLLVATFTECTSNAATTTLLLPILASMAQAICLHPLYVMLPCTLASSLAFMLPVATPPNAIVFSFGGLRVSDMARAGIMLNIIGVLVIMLAINSWGVPMFQLHTFPSWAHSNSTTHCLASPPTAPSP</sequence>
<comment type="function">
    <text evidence="2 3 6 7">Low-affinity sodium-dicarboxylate cotransporter, that mediates the entry of citric acid cycle intermediates, such as succinate, citrate, fumarate and alpha-ketoglutarate (2-oxoglutarate) into the small intestine and renal proximal tubule (By similarity) (PubMed:28731330, PubMed:7890707). Transports the dicarboxylate into the cell with a probable stoichiometry of 3 Na(+) for 1 divalent dicarboxylate, rendering the process electrogenic (PubMed:28731330, PubMed:7890707). Citrate is transported in protonated form as a divalent anion, rather than the trivalent form which is normally found in blood (PubMed:28731330). Has a critical role in renal dicarboxylate transport (By similarity).</text>
</comment>
<comment type="catalytic activity">
    <reaction evidence="6 7">
        <text>succinate(out) + 3 Na(+)(out) = succinate(in) + 3 Na(+)(in)</text>
        <dbReference type="Rhea" id="RHEA:71919"/>
        <dbReference type="ChEBI" id="CHEBI:29101"/>
        <dbReference type="ChEBI" id="CHEBI:30031"/>
    </reaction>
</comment>
<comment type="catalytic activity">
    <reaction evidence="2">
        <text>fumarate(out) + 3 Na(+)(out) = fumarate(in) + 3 Na(+)(in)</text>
        <dbReference type="Rhea" id="RHEA:71931"/>
        <dbReference type="ChEBI" id="CHEBI:29101"/>
        <dbReference type="ChEBI" id="CHEBI:29806"/>
    </reaction>
</comment>
<comment type="catalytic activity">
    <reaction evidence="2">
        <text>2-oxoglutarate(out) + 3 Na(+)(out) = 2-oxoglutarate(in) + 3 Na(+)(in)</text>
        <dbReference type="Rhea" id="RHEA:71939"/>
        <dbReference type="ChEBI" id="CHEBI:16810"/>
        <dbReference type="ChEBI" id="CHEBI:29101"/>
    </reaction>
</comment>
<comment type="activity regulation">
    <text evidence="6 7">Li(+) decreases succinate transport in the presence of Na(+), by competing at one of the three cation binding sites.</text>
</comment>
<comment type="biophysicochemical properties">
    <kinetics>
        <KM evidence="7">446 uM for succinate</KM>
    </kinetics>
</comment>
<comment type="subcellular location">
    <subcellularLocation>
        <location evidence="1">Apical cell membrane</location>
        <topology evidence="4">Multi-pass membrane protein</topology>
    </subcellularLocation>
</comment>
<comment type="tissue specificity">
    <text evidence="7">Abundant in kidney and small intestine.</text>
</comment>
<comment type="similarity">
    <text evidence="9">Belongs to the SLC13A/DASS transporter (TC 2.A.47) family. NADC subfamily.</text>
</comment>
<evidence type="ECO:0000250" key="1">
    <source>
        <dbReference type="UniProtKB" id="P70545"/>
    </source>
</evidence>
<evidence type="ECO:0000250" key="2">
    <source>
        <dbReference type="UniProtKB" id="Q13183"/>
    </source>
</evidence>
<evidence type="ECO:0000250" key="3">
    <source>
        <dbReference type="UniProtKB" id="Q9ES88"/>
    </source>
</evidence>
<evidence type="ECO:0000255" key="4"/>
<evidence type="ECO:0000256" key="5">
    <source>
        <dbReference type="SAM" id="MobiDB-lite"/>
    </source>
</evidence>
<evidence type="ECO:0000269" key="6">
    <source>
    </source>
</evidence>
<evidence type="ECO:0000269" key="7">
    <source>
    </source>
</evidence>
<evidence type="ECO:0000303" key="8">
    <source>
    </source>
</evidence>
<evidence type="ECO:0000305" key="9"/>
<dbReference type="EMBL" id="U12186">
    <property type="protein sequence ID" value="AAA99666.1"/>
    <property type="molecule type" value="mRNA"/>
</dbReference>
<dbReference type="PIR" id="I46528">
    <property type="entry name" value="I46528"/>
</dbReference>
<dbReference type="RefSeq" id="NP_001171063.1">
    <property type="nucleotide sequence ID" value="NM_001177592.2"/>
</dbReference>
<dbReference type="SMR" id="Q28615"/>
<dbReference type="FunCoup" id="Q28615">
    <property type="interactions" value="12"/>
</dbReference>
<dbReference type="STRING" id="9986.ENSOCUP00000011839"/>
<dbReference type="PaxDb" id="9986-ENSOCUP00000011839"/>
<dbReference type="GeneID" id="100009593"/>
<dbReference type="KEGG" id="ocu:100009593"/>
<dbReference type="CTD" id="9058"/>
<dbReference type="eggNOG" id="KOG1281">
    <property type="taxonomic scope" value="Eukaryota"/>
</dbReference>
<dbReference type="InParanoid" id="Q28615"/>
<dbReference type="OrthoDB" id="6493944at2759"/>
<dbReference type="TreeFam" id="TF312913"/>
<dbReference type="SABIO-RK" id="Q28615"/>
<dbReference type="Proteomes" id="UP000001811">
    <property type="component" value="Unplaced"/>
</dbReference>
<dbReference type="GO" id="GO:0016324">
    <property type="term" value="C:apical plasma membrane"/>
    <property type="evidence" value="ECO:0000250"/>
    <property type="project" value="UniProtKB"/>
</dbReference>
<dbReference type="GO" id="GO:0015139">
    <property type="term" value="F:alpha-ketoglutarate transmembrane transporter activity"/>
    <property type="evidence" value="ECO:0000250"/>
    <property type="project" value="UniProtKB"/>
</dbReference>
<dbReference type="GO" id="GO:0015138">
    <property type="term" value="F:fumarate transmembrane transporter activity"/>
    <property type="evidence" value="ECO:0000250"/>
    <property type="project" value="UniProtKB"/>
</dbReference>
<dbReference type="GO" id="GO:0017153">
    <property type="term" value="F:sodium:dicarboxylate symporter activity"/>
    <property type="evidence" value="ECO:0000314"/>
    <property type="project" value="UniProtKB"/>
</dbReference>
<dbReference type="GO" id="GO:0015141">
    <property type="term" value="F:succinate transmembrane transporter activity"/>
    <property type="evidence" value="ECO:0000314"/>
    <property type="project" value="UniProtKB"/>
</dbReference>
<dbReference type="GO" id="GO:0015742">
    <property type="term" value="P:alpha-ketoglutarate transport"/>
    <property type="evidence" value="ECO:0000250"/>
    <property type="project" value="UniProtKB"/>
</dbReference>
<dbReference type="GO" id="GO:0071285">
    <property type="term" value="P:cellular response to lithium ion"/>
    <property type="evidence" value="ECO:0007669"/>
    <property type="project" value="TreeGrafter"/>
</dbReference>
<dbReference type="GO" id="GO:0015741">
    <property type="term" value="P:fumarate transport"/>
    <property type="evidence" value="ECO:0000250"/>
    <property type="project" value="UniProtKB"/>
</dbReference>
<dbReference type="GO" id="GO:0071422">
    <property type="term" value="P:succinate transmembrane transport"/>
    <property type="evidence" value="ECO:0000314"/>
    <property type="project" value="UniProtKB"/>
</dbReference>
<dbReference type="CDD" id="cd01115">
    <property type="entry name" value="SLC13_permease"/>
    <property type="match status" value="1"/>
</dbReference>
<dbReference type="InterPro" id="IPR031312">
    <property type="entry name" value="Na/sul_symport_CS"/>
</dbReference>
<dbReference type="InterPro" id="IPR001898">
    <property type="entry name" value="SLC13A/DASS"/>
</dbReference>
<dbReference type="PANTHER" id="PTHR10283">
    <property type="entry name" value="SOLUTE CARRIER FAMILY 13 MEMBER"/>
    <property type="match status" value="1"/>
</dbReference>
<dbReference type="PANTHER" id="PTHR10283:SF82">
    <property type="entry name" value="SOLUTE CARRIER FAMILY 13 MEMBER 2"/>
    <property type="match status" value="1"/>
</dbReference>
<dbReference type="Pfam" id="PF00939">
    <property type="entry name" value="Na_sulph_symp"/>
    <property type="match status" value="1"/>
</dbReference>
<dbReference type="PROSITE" id="PS01271">
    <property type="entry name" value="NA_SULFATE"/>
    <property type="match status" value="1"/>
</dbReference>
<organism>
    <name type="scientific">Oryctolagus cuniculus</name>
    <name type="common">Rabbit</name>
    <dbReference type="NCBI Taxonomy" id="9986"/>
    <lineage>
        <taxon>Eukaryota</taxon>
        <taxon>Metazoa</taxon>
        <taxon>Chordata</taxon>
        <taxon>Craniata</taxon>
        <taxon>Vertebrata</taxon>
        <taxon>Euteleostomi</taxon>
        <taxon>Mammalia</taxon>
        <taxon>Eutheria</taxon>
        <taxon>Euarchontoglires</taxon>
        <taxon>Glires</taxon>
        <taxon>Lagomorpha</taxon>
        <taxon>Leporidae</taxon>
        <taxon>Oryctolagus</taxon>
    </lineage>
</organism>
<name>S13A2_RABIT</name>
<feature type="chain" id="PRO_0000172490" description="Solute carrier family 13 member 2">
    <location>
        <begin position="1"/>
        <end position="593"/>
    </location>
</feature>
<feature type="transmembrane region" description="Helical" evidence="4">
    <location>
        <begin position="11"/>
        <end position="31"/>
    </location>
</feature>
<feature type="transmembrane region" description="Helical" evidence="4">
    <location>
        <begin position="53"/>
        <end position="73"/>
    </location>
</feature>
<feature type="transmembrane region" description="Helical" evidence="4">
    <location>
        <begin position="86"/>
        <end position="106"/>
    </location>
</feature>
<feature type="transmembrane region" description="Helical" evidence="4">
    <location>
        <begin position="121"/>
        <end position="141"/>
    </location>
</feature>
<feature type="transmembrane region" description="Helical" evidence="4">
    <location>
        <begin position="221"/>
        <end position="241"/>
    </location>
</feature>
<feature type="transmembrane region" description="Helical" evidence="4">
    <location>
        <begin position="270"/>
        <end position="290"/>
    </location>
</feature>
<feature type="transmembrane region" description="Helical" evidence="4">
    <location>
        <begin position="327"/>
        <end position="347"/>
    </location>
</feature>
<feature type="transmembrane region" description="Helical" evidence="4">
    <location>
        <begin position="369"/>
        <end position="389"/>
    </location>
</feature>
<feature type="transmembrane region" description="Helical" evidence="4">
    <location>
        <begin position="451"/>
        <end position="471"/>
    </location>
</feature>
<feature type="transmembrane region" description="Helical" evidence="4">
    <location>
        <begin position="485"/>
        <end position="505"/>
    </location>
</feature>
<feature type="transmembrane region" description="Helical" evidence="4">
    <location>
        <begin position="514"/>
        <end position="534"/>
    </location>
</feature>
<feature type="transmembrane region" description="Helical" evidence="4">
    <location>
        <begin position="543"/>
        <end position="563"/>
    </location>
</feature>
<feature type="region of interest" description="Disordered" evidence="5">
    <location>
        <begin position="164"/>
        <end position="204"/>
    </location>
</feature>
<feature type="compositionally biased region" description="Polar residues" evidence="5">
    <location>
        <begin position="164"/>
        <end position="184"/>
    </location>
</feature>
<feature type="compositionally biased region" description="Basic and acidic residues" evidence="5">
    <location>
        <begin position="185"/>
        <end position="194"/>
    </location>
</feature>
<feature type="mutagenesis site" description="Decreases cell membrane expression. Decreases succinate transport activity. Decreases Km value for succinate." evidence="6">
    <original>L</original>
    <variation>C</variation>
    <location>
        <position position="83"/>
    </location>
</feature>
<feature type="mutagenesis site" description="Does not affect cell membrane localization. Decreases succinate transport activity." evidence="6">
    <original>T</original>
    <variation>C</variation>
    <location>
        <position position="86"/>
    </location>
</feature>
<feature type="mutagenesis site" description="Does not affect cell membrane localization. Decreases succinate transport activity." evidence="6">
    <original>Y</original>
    <variation>C</variation>
    <location>
        <position position="228"/>
    </location>
</feature>
<feature type="mutagenesis site" description="Does not affect cell membrane localization. Decreases succinate transport activity. Decreases Km value for succinate. More sensitive to inhibition by lithium." evidence="6">
    <original>Y</original>
    <variation>C</variation>
    <location>
        <position position="432"/>
    </location>
</feature>
<feature type="mutagenesis site" description="Does not affect cell membrane localization. Abolishes succinate transport activity." evidence="6">
    <original>T</original>
    <variation>C</variation>
    <location>
        <position position="474"/>
    </location>
</feature>
<feature type="mutagenesis site" description="Decreases cell membrane expression. Decreases succinate transport activity." evidence="6">
    <original>N</original>
    <variation>C</variation>
    <location>
        <position position="525"/>
    </location>
</feature>
<feature type="mutagenesis site" description="Does not affect cell membrane localization. Decreases succinate transport activity. Insensitive to inhibition by lithium." evidence="6">
    <original>M</original>
    <variation>C</variation>
    <location>
        <position position="539"/>
    </location>
</feature>
<reference key="1">
    <citation type="journal article" date="1995" name="J. Biol. Chem.">
        <title>Sequence and functional characterization of a renal sodium/dicarboxylate cotransporter.</title>
        <authorList>
            <person name="Pajor A.M."/>
        </authorList>
    </citation>
    <scope>NUCLEOTIDE SEQUENCE [MRNA]</scope>
    <scope>TRANSPORTER ACTIVITY</scope>
    <scope>FUNCTION</scope>
    <scope>BIOPHYSICOCHEMICAL PROPERTIES</scope>
    <scope>TISSUE SPECIFICITY</scope>
    <scope>ACTIVITY REGULATION</scope>
    <source>
        <strain>New Zealand white</strain>
        <tissue>Kidney cortex</tissue>
    </source>
</reference>
<reference key="2">
    <citation type="journal article" date="2017" name="Biochemistry">
        <title>Mapping functionally important residues in the Na+/dicarboxylate cotransporter, NaDC1.</title>
        <authorList>
            <person name="Colas C."/>
            <person name="Schlessinger A."/>
            <person name="Pajor A.M."/>
        </authorList>
    </citation>
    <scope>FUNCTION</scope>
    <scope>TRANSPORTER ACTIVITY</scope>
    <scope>ACTIVITY REGULATION</scope>
    <scope>MUTAGENESIS OF LEU-83; THR-86; TYR-228; TYR-432; THR-474; ASN-525 AND MET-539</scope>
</reference>
<gene>
    <name type="primary">SLC13A2</name>
    <name type="synonym">NADC1</name>
    <name type="synonym">SDCT1</name>
</gene>
<accession>Q28615</accession>
<keyword id="KW-1003">Cell membrane</keyword>
<keyword id="KW-0406">Ion transport</keyword>
<keyword id="KW-0472">Membrane</keyword>
<keyword id="KW-1185">Reference proteome</keyword>
<keyword id="KW-0915">Sodium</keyword>
<keyword id="KW-0739">Sodium transport</keyword>
<keyword id="KW-0769">Symport</keyword>
<keyword id="KW-0812">Transmembrane</keyword>
<keyword id="KW-1133">Transmembrane helix</keyword>
<keyword id="KW-0813">Transport</keyword>